<sequence>MSIKTVKDFSSFAGKRALVRCDFNVPLKEGSISDDTRIRAALSTIEYLKERGARIVLVSHLGRPDGKKNPKYSLKPVANRLSELLGQDVKMLSDCIGSEVVNSTLQMKDGDVVLLENVRFYAEEEKNDKNFAKKLSENGDVFVNDAFGAAHRAHASTVGVADYLPSVGGFLMEKEDKFLGGILKNPERPFVSIIGGSKVSSKIAVLESLLSKSNVVVIGGGMAYTFLHSEGYSIGKSLLEDEYIGIASSFLKKAKELGVKVILPLDHIVADDFNKNSIPEYIDSFNIPENKIGMDIGANTLKEIENVVKTAKTIIWNGPLGVFEFDSFSKGTAKVAEMVASCSGLTVVGGGDSVAAVNKFNLSDKITHVSTGGGASLEYLEGRILPGIKVLEN</sequence>
<name>PGK_BORBU</name>
<proteinExistence type="inferred from homology"/>
<protein>
    <recommendedName>
        <fullName>Phosphoglycerate kinase</fullName>
        <ecNumber>2.7.2.3</ecNumber>
    </recommendedName>
</protein>
<reference key="1">
    <citation type="journal article" date="1996" name="Infect. Immun.">
        <title>A glyceraldehyde-3-phosphate dehydrogenase homolog in Borrelia burgdorferi and Borrelia hermsii.</title>
        <authorList>
            <person name="Anda P."/>
            <person name="Gebbia J.A."/>
            <person name="Backenson P.B."/>
            <person name="Coleman J.L."/>
            <person name="Benach J.L."/>
        </authorList>
    </citation>
    <scope>NUCLEOTIDE SEQUENCE [GENOMIC DNA]</scope>
    <source>
        <strain>ATCC 35210 / DSM 4680 / CIP 102532 / B31</strain>
    </source>
</reference>
<reference key="2">
    <citation type="journal article" date="1997" name="Nature">
        <title>Genomic sequence of a Lyme disease spirochaete, Borrelia burgdorferi.</title>
        <authorList>
            <person name="Fraser C.M."/>
            <person name="Casjens S."/>
            <person name="Huang W.M."/>
            <person name="Sutton G.G."/>
            <person name="Clayton R.A."/>
            <person name="Lathigra R."/>
            <person name="White O."/>
            <person name="Ketchum K.A."/>
            <person name="Dodson R.J."/>
            <person name="Hickey E.K."/>
            <person name="Gwinn M.L."/>
            <person name="Dougherty B.A."/>
            <person name="Tomb J.-F."/>
            <person name="Fleischmann R.D."/>
            <person name="Richardson D.L."/>
            <person name="Peterson J.D."/>
            <person name="Kerlavage A.R."/>
            <person name="Quackenbush J."/>
            <person name="Salzberg S.L."/>
            <person name="Hanson M."/>
            <person name="van Vugt R."/>
            <person name="Palmer N."/>
            <person name="Adams M.D."/>
            <person name="Gocayne J.D."/>
            <person name="Weidman J.F."/>
            <person name="Utterback T.R."/>
            <person name="Watthey L."/>
            <person name="McDonald L.A."/>
            <person name="Artiach P."/>
            <person name="Bowman C."/>
            <person name="Garland S.A."/>
            <person name="Fujii C."/>
            <person name="Cotton M.D."/>
            <person name="Horst K."/>
            <person name="Roberts K.M."/>
            <person name="Hatch B."/>
            <person name="Smith H.O."/>
            <person name="Venter J.C."/>
        </authorList>
    </citation>
    <scope>NUCLEOTIDE SEQUENCE [LARGE SCALE GENOMIC DNA]</scope>
    <source>
        <strain>ATCC 35210 / DSM 4680 / CIP 102532 / B31</strain>
    </source>
</reference>
<reference key="3">
    <citation type="journal article" date="1994" name="Microbiology">
        <title>Conservation of gene arrangement and an unusual organization of rRNA genes in the linear chromosomes of the Lyme disease spirochaetes Borrelia burgdorferi, B. garinii and B. afzelii.</title>
        <authorList>
            <person name="Ojaimi C."/>
            <person name="Davidson B.E."/>
            <person name="Saint-Girons I."/>
            <person name="Old I.G."/>
        </authorList>
    </citation>
    <scope>NUCLEOTIDE SEQUENCE [GENOMIC DNA] OF 346-393</scope>
    <source>
        <strain>212</strain>
    </source>
</reference>
<comment type="catalytic activity">
    <reaction>
        <text>(2R)-3-phosphoglycerate + ATP = (2R)-3-phospho-glyceroyl phosphate + ADP</text>
        <dbReference type="Rhea" id="RHEA:14801"/>
        <dbReference type="ChEBI" id="CHEBI:30616"/>
        <dbReference type="ChEBI" id="CHEBI:57604"/>
        <dbReference type="ChEBI" id="CHEBI:58272"/>
        <dbReference type="ChEBI" id="CHEBI:456216"/>
        <dbReference type="EC" id="2.7.2.3"/>
    </reaction>
</comment>
<comment type="pathway">
    <text>Carbohydrate degradation; glycolysis; pyruvate from D-glyceraldehyde 3-phosphate: step 2/5.</text>
</comment>
<comment type="subunit">
    <text evidence="1">Monomer.</text>
</comment>
<comment type="subcellular location">
    <subcellularLocation>
        <location>Cytoplasm</location>
    </subcellularLocation>
</comment>
<comment type="similarity">
    <text evidence="2">Belongs to the phosphoglycerate kinase family.</text>
</comment>
<organism>
    <name type="scientific">Borreliella burgdorferi (strain ATCC 35210 / DSM 4680 / CIP 102532 / B31)</name>
    <name type="common">Borrelia burgdorferi</name>
    <dbReference type="NCBI Taxonomy" id="224326"/>
    <lineage>
        <taxon>Bacteria</taxon>
        <taxon>Pseudomonadati</taxon>
        <taxon>Spirochaetota</taxon>
        <taxon>Spirochaetia</taxon>
        <taxon>Spirochaetales</taxon>
        <taxon>Borreliaceae</taxon>
        <taxon>Borreliella</taxon>
    </lineage>
</organism>
<evidence type="ECO:0000250" key="1"/>
<evidence type="ECO:0000305" key="2"/>
<dbReference type="EC" id="2.7.2.3"/>
<dbReference type="EMBL" id="U28760">
    <property type="protein sequence ID" value="AAB53931.1"/>
    <property type="molecule type" value="Genomic_DNA"/>
</dbReference>
<dbReference type="EMBL" id="AE000783">
    <property type="protein sequence ID" value="AAC66451.1"/>
    <property type="molecule type" value="Genomic_DNA"/>
</dbReference>
<dbReference type="EMBL" id="L32595">
    <property type="protein sequence ID" value="AAC41405.1"/>
    <property type="molecule type" value="Genomic_DNA"/>
</dbReference>
<dbReference type="PIR" id="H70106">
    <property type="entry name" value="H70106"/>
</dbReference>
<dbReference type="RefSeq" id="NP_212190.1">
    <property type="nucleotide sequence ID" value="NC_001318.1"/>
</dbReference>
<dbReference type="RefSeq" id="WP_010255334.1">
    <property type="nucleotide sequence ID" value="NC_001318.1"/>
</dbReference>
<dbReference type="SMR" id="Q59181"/>
<dbReference type="STRING" id="224326.BB_0056"/>
<dbReference type="PaxDb" id="224326-BB_0056"/>
<dbReference type="EnsemblBacteria" id="AAC66451">
    <property type="protein sequence ID" value="AAC66451"/>
    <property type="gene ID" value="BB_0056"/>
</dbReference>
<dbReference type="KEGG" id="bbu:BB_0056"/>
<dbReference type="PATRIC" id="fig|224326.49.peg.454"/>
<dbReference type="HOGENOM" id="CLU_025427_0_2_12"/>
<dbReference type="OrthoDB" id="9808460at2"/>
<dbReference type="UniPathway" id="UPA00109">
    <property type="reaction ID" value="UER00185"/>
</dbReference>
<dbReference type="Proteomes" id="UP000001807">
    <property type="component" value="Chromosome"/>
</dbReference>
<dbReference type="GO" id="GO:0005829">
    <property type="term" value="C:cytosol"/>
    <property type="evidence" value="ECO:0000314"/>
    <property type="project" value="CAFA"/>
</dbReference>
<dbReference type="GO" id="GO:0043531">
    <property type="term" value="F:ADP binding"/>
    <property type="evidence" value="ECO:0007669"/>
    <property type="project" value="TreeGrafter"/>
</dbReference>
<dbReference type="GO" id="GO:0005524">
    <property type="term" value="F:ATP binding"/>
    <property type="evidence" value="ECO:0007669"/>
    <property type="project" value="UniProtKB-KW"/>
</dbReference>
<dbReference type="GO" id="GO:0004618">
    <property type="term" value="F:phosphoglycerate kinase activity"/>
    <property type="evidence" value="ECO:0007669"/>
    <property type="project" value="UniProtKB-UniRule"/>
</dbReference>
<dbReference type="GO" id="GO:0006094">
    <property type="term" value="P:gluconeogenesis"/>
    <property type="evidence" value="ECO:0007669"/>
    <property type="project" value="TreeGrafter"/>
</dbReference>
<dbReference type="GO" id="GO:0006096">
    <property type="term" value="P:glycolytic process"/>
    <property type="evidence" value="ECO:0007669"/>
    <property type="project" value="UniProtKB-UniRule"/>
</dbReference>
<dbReference type="CDD" id="cd00318">
    <property type="entry name" value="Phosphoglycerate_kinase"/>
    <property type="match status" value="1"/>
</dbReference>
<dbReference type="FunFam" id="3.40.50.1260:FF:000003">
    <property type="entry name" value="Phosphoglycerate kinase"/>
    <property type="match status" value="1"/>
</dbReference>
<dbReference type="FunFam" id="3.40.50.1260:FF:000006">
    <property type="entry name" value="Phosphoglycerate kinase"/>
    <property type="match status" value="1"/>
</dbReference>
<dbReference type="Gene3D" id="3.40.50.1260">
    <property type="entry name" value="Phosphoglycerate kinase, N-terminal domain"/>
    <property type="match status" value="2"/>
</dbReference>
<dbReference type="HAMAP" id="MF_00145">
    <property type="entry name" value="Phosphoglyc_kinase"/>
    <property type="match status" value="1"/>
</dbReference>
<dbReference type="InterPro" id="IPR001576">
    <property type="entry name" value="Phosphoglycerate_kinase"/>
</dbReference>
<dbReference type="InterPro" id="IPR015824">
    <property type="entry name" value="Phosphoglycerate_kinase_N"/>
</dbReference>
<dbReference type="InterPro" id="IPR036043">
    <property type="entry name" value="Phosphoglycerate_kinase_sf"/>
</dbReference>
<dbReference type="PANTHER" id="PTHR11406">
    <property type="entry name" value="PHOSPHOGLYCERATE KINASE"/>
    <property type="match status" value="1"/>
</dbReference>
<dbReference type="PANTHER" id="PTHR11406:SF23">
    <property type="entry name" value="PHOSPHOGLYCERATE KINASE 1, CHLOROPLASTIC-RELATED"/>
    <property type="match status" value="1"/>
</dbReference>
<dbReference type="Pfam" id="PF00162">
    <property type="entry name" value="PGK"/>
    <property type="match status" value="1"/>
</dbReference>
<dbReference type="PIRSF" id="PIRSF000724">
    <property type="entry name" value="Pgk"/>
    <property type="match status" value="1"/>
</dbReference>
<dbReference type="PRINTS" id="PR00477">
    <property type="entry name" value="PHGLYCKINASE"/>
</dbReference>
<dbReference type="SUPFAM" id="SSF53748">
    <property type="entry name" value="Phosphoglycerate kinase"/>
    <property type="match status" value="1"/>
</dbReference>
<feature type="chain" id="PRO_0000145911" description="Phosphoglycerate kinase">
    <location>
        <begin position="1"/>
        <end position="393"/>
    </location>
</feature>
<feature type="binding site" evidence="1">
    <location>
        <begin position="22"/>
        <end position="24"/>
    </location>
    <ligand>
        <name>substrate</name>
    </ligand>
</feature>
<feature type="binding site" evidence="1">
    <location>
        <position position="37"/>
    </location>
    <ligand>
        <name>substrate</name>
    </ligand>
</feature>
<feature type="binding site" evidence="1">
    <location>
        <begin position="60"/>
        <end position="63"/>
    </location>
    <ligand>
        <name>substrate</name>
    </ligand>
</feature>
<feature type="binding site" evidence="1">
    <location>
        <position position="119"/>
    </location>
    <ligand>
        <name>substrate</name>
    </ligand>
</feature>
<feature type="binding site" evidence="1">
    <location>
        <position position="152"/>
    </location>
    <ligand>
        <name>substrate</name>
    </ligand>
</feature>
<feature type="binding site" evidence="1">
    <location>
        <position position="202"/>
    </location>
    <ligand>
        <name>ATP</name>
        <dbReference type="ChEBI" id="CHEBI:30616"/>
    </ligand>
</feature>
<feature type="binding site" evidence="1">
    <location>
        <position position="293"/>
    </location>
    <ligand>
        <name>ATP</name>
        <dbReference type="ChEBI" id="CHEBI:30616"/>
    </ligand>
</feature>
<feature type="binding site" evidence="1">
    <location>
        <position position="324"/>
    </location>
    <ligand>
        <name>ATP</name>
        <dbReference type="ChEBI" id="CHEBI:30616"/>
    </ligand>
</feature>
<feature type="binding site" evidence="1">
    <location>
        <begin position="350"/>
        <end position="353"/>
    </location>
    <ligand>
        <name>ATP</name>
        <dbReference type="ChEBI" id="CHEBI:30616"/>
    </ligand>
</feature>
<feature type="sequence conflict" description="In Ref. 1; AAB53931." evidence="2" ref="1">
    <original>L</original>
    <variation>S</variation>
    <location>
        <position position="164"/>
    </location>
</feature>
<feature type="sequence conflict" description="In Ref. 1; AAB53931." evidence="2" ref="1">
    <original>KF</original>
    <variation>NS</variation>
    <location>
        <begin position="177"/>
        <end position="178"/>
    </location>
</feature>
<feature type="sequence conflict" description="In Ref. 1; AAB53931." evidence="2" ref="1">
    <original>F</original>
    <variation>S</variation>
    <location>
        <position position="190"/>
    </location>
</feature>
<keyword id="KW-0067">ATP-binding</keyword>
<keyword id="KW-0963">Cytoplasm</keyword>
<keyword id="KW-0324">Glycolysis</keyword>
<keyword id="KW-0418">Kinase</keyword>
<keyword id="KW-0547">Nucleotide-binding</keyword>
<keyword id="KW-1185">Reference proteome</keyword>
<keyword id="KW-0808">Transferase</keyword>
<gene>
    <name type="primary">pgk</name>
    <name type="ordered locus">BB_0056</name>
</gene>
<accession>Q59181</accession>
<accession>Q59186</accession>